<organism>
    <name type="scientific">Mycobacterium leprae (strain TN)</name>
    <dbReference type="NCBI Taxonomy" id="272631"/>
    <lineage>
        <taxon>Bacteria</taxon>
        <taxon>Bacillati</taxon>
        <taxon>Actinomycetota</taxon>
        <taxon>Actinomycetes</taxon>
        <taxon>Mycobacteriales</taxon>
        <taxon>Mycobacteriaceae</taxon>
        <taxon>Mycobacterium</taxon>
    </lineage>
</organism>
<proteinExistence type="inferred from homology"/>
<reference key="1">
    <citation type="journal article" date="2001" name="Nature">
        <title>Massive gene decay in the leprosy bacillus.</title>
        <authorList>
            <person name="Cole S.T."/>
            <person name="Eiglmeier K."/>
            <person name="Parkhill J."/>
            <person name="James K.D."/>
            <person name="Thomson N.R."/>
            <person name="Wheeler P.R."/>
            <person name="Honore N."/>
            <person name="Garnier T."/>
            <person name="Churcher C.M."/>
            <person name="Harris D.E."/>
            <person name="Mungall K.L."/>
            <person name="Basham D."/>
            <person name="Brown D."/>
            <person name="Chillingworth T."/>
            <person name="Connor R."/>
            <person name="Davies R.M."/>
            <person name="Devlin K."/>
            <person name="Duthoy S."/>
            <person name="Feltwell T."/>
            <person name="Fraser A."/>
            <person name="Hamlin N."/>
            <person name="Holroyd S."/>
            <person name="Hornsby T."/>
            <person name="Jagels K."/>
            <person name="Lacroix C."/>
            <person name="Maclean J."/>
            <person name="Moule S."/>
            <person name="Murphy L.D."/>
            <person name="Oliver K."/>
            <person name="Quail M.A."/>
            <person name="Rajandream M.A."/>
            <person name="Rutherford K.M."/>
            <person name="Rutter S."/>
            <person name="Seeger K."/>
            <person name="Simon S."/>
            <person name="Simmonds M."/>
            <person name="Skelton J."/>
            <person name="Squares R."/>
            <person name="Squares S."/>
            <person name="Stevens K."/>
            <person name="Taylor K."/>
            <person name="Whitehead S."/>
            <person name="Woodward J.R."/>
            <person name="Barrell B.G."/>
        </authorList>
    </citation>
    <scope>NUCLEOTIDE SEQUENCE [LARGE SCALE GENOMIC DNA]</scope>
    <source>
        <strain>TN</strain>
    </source>
</reference>
<reference key="2">
    <citation type="journal article" date="2009" name="PLoS Pathog.">
        <title>Systematic genetic nomenclature for type VII secretion systems.</title>
        <authorList>
            <person name="Bitter W."/>
            <person name="Houben E.N."/>
            <person name="Bottai D."/>
            <person name="Brodin P."/>
            <person name="Brown E.J."/>
            <person name="Cox J.S."/>
            <person name="Derbyshire K."/>
            <person name="Fortune S.M."/>
            <person name="Gao L.Y."/>
            <person name="Liu J."/>
            <person name="Gey van Pittius N.C."/>
            <person name="Pym A.S."/>
            <person name="Rubin E.J."/>
            <person name="Sherman D.R."/>
            <person name="Cole S.T."/>
            <person name="Brosch R."/>
        </authorList>
    </citation>
    <scope>NOMENCLATURE</scope>
</reference>
<evidence type="ECO:0000250" key="1">
    <source>
        <dbReference type="UniProtKB" id="B2HSU9"/>
    </source>
</evidence>
<evidence type="ECO:0000250" key="2">
    <source>
        <dbReference type="UniProtKB" id="P9WPH9"/>
    </source>
</evidence>
<evidence type="ECO:0000255" key="3"/>
<evidence type="ECO:0000303" key="4">
    <source>
    </source>
</evidence>
<evidence type="ECO:0000305" key="5"/>
<gene>
    <name evidence="4" type="primary">eccA3</name>
    <name type="ordered locus">ML2537</name>
</gene>
<feature type="chain" id="PRO_0000063044" description="ESX-3 secretion system protein EccA3">
    <location>
        <begin position="1"/>
        <end position="640"/>
    </location>
</feature>
<feature type="binding site" evidence="3">
    <location>
        <begin position="393"/>
        <end position="400"/>
    </location>
    <ligand>
        <name>ATP</name>
        <dbReference type="ChEBI" id="CHEBI:30616"/>
    </ligand>
</feature>
<protein>
    <recommendedName>
        <fullName evidence="5">ESX-3 secretion system protein EccA3</fullName>
    </recommendedName>
    <alternativeName>
        <fullName evidence="4">ESX conserved component A3</fullName>
    </alternativeName>
    <alternativeName>
        <fullName evidence="5">Type VII secretion system protein EccA3</fullName>
        <shortName evidence="5">T7SS protein EccA3</shortName>
    </alternativeName>
</protein>
<name>ECCA3_MYCLE</name>
<comment type="function">
    <text evidence="2">Part of an ESX-3 / type VII specialized secretion system (T7SS), which exports several proteins. EccA3 exhibits ATPase activity and may provide energy for the export of ESX-3 substrates (By similarity).</text>
</comment>
<comment type="subunit">
    <text evidence="2">Part of the ESX-3 / type VII secretion system (T7SS), which is composed of cytosolic and membrane components (By similarity).</text>
</comment>
<comment type="subcellular location">
    <subcellularLocation>
        <location evidence="1">Cytoplasm</location>
    </subcellularLocation>
</comment>
<comment type="similarity">
    <text evidence="5">Belongs to the CbxX/CfxQ family.</text>
</comment>
<accession>Q9CD28</accession>
<sequence>MLISGRSGWAILGTGGKAAVNRGDAGKLGGQSVIARAHVKVDGDVVSRFATCCRALGLAVYDRQRPADLAAARSGFTALARIAHDQCDVWIGLAAAGDVSTPVLAAISCTADTAGMLQRQVELAPAALGFHYDTGLYLQFRAIGPDDFHLAYAASLASTGGPGPYAEADQIVTGIIDRRPGWRDARWVAAVIHYRAGRWSDVVKLLTPIVNDPDIDEAYTHAAKIALGTALARLGMFAPALSYLEEPAGPVAVAAVDGALAKALVLRAHTDEESASEVLQDLYAAHPDNEQIEQALSDTSFGIVTTTAARIDARTDPWDPETEPGVEDFIDPAAHERKAVLLHEAERQLAEFIGLDEVKNQVSRLKSSVAMELVRKQRGLMVAQRAHHLVFAGPPGTGKTTIARVVAKVYCGLGLLKKENIREVHRADLIGQHIGETEAKTNAVIDSALDGVLFLDEAYALVATGAKNDFGLVAIDTLLARMENDRDRLVVIIAGYRADLDKFLDTNEGLRSRFTRNIDFPSYASHELVEIAHKMAEQRDSVFEQAALDELEVLFANLATSSTPDSNGISRRSLDIAGNGRFVRNIVERSEEEREFRLDHSNNVGTGELSDEELMTVTSEDVRRSVEPLLRGLGLMVPHD</sequence>
<dbReference type="EMBL" id="AL583926">
    <property type="protein sequence ID" value="CAC32068.1"/>
    <property type="molecule type" value="Genomic_DNA"/>
</dbReference>
<dbReference type="PIR" id="F87226">
    <property type="entry name" value="F87226"/>
</dbReference>
<dbReference type="RefSeq" id="NP_302631.1">
    <property type="nucleotide sequence ID" value="NC_002677.1"/>
</dbReference>
<dbReference type="SMR" id="Q9CD28"/>
<dbReference type="STRING" id="272631.gene:17576402"/>
<dbReference type="KEGG" id="mle:ML2537"/>
<dbReference type="PATRIC" id="fig|272631.5.peg.4869"/>
<dbReference type="Leproma" id="ML2537"/>
<dbReference type="eggNOG" id="COG0464">
    <property type="taxonomic scope" value="Bacteria"/>
</dbReference>
<dbReference type="HOGENOM" id="CLU_008749_5_0_11"/>
<dbReference type="OrthoDB" id="9806903at2"/>
<dbReference type="Proteomes" id="UP000000806">
    <property type="component" value="Chromosome"/>
</dbReference>
<dbReference type="GO" id="GO:0005737">
    <property type="term" value="C:cytoplasm"/>
    <property type="evidence" value="ECO:0007669"/>
    <property type="project" value="UniProtKB-SubCell"/>
</dbReference>
<dbReference type="GO" id="GO:0005524">
    <property type="term" value="F:ATP binding"/>
    <property type="evidence" value="ECO:0007669"/>
    <property type="project" value="UniProtKB-KW"/>
</dbReference>
<dbReference type="GO" id="GO:0016887">
    <property type="term" value="F:ATP hydrolysis activity"/>
    <property type="evidence" value="ECO:0007669"/>
    <property type="project" value="InterPro"/>
</dbReference>
<dbReference type="CDD" id="cd00009">
    <property type="entry name" value="AAA"/>
    <property type="match status" value="1"/>
</dbReference>
<dbReference type="FunFam" id="3.40.50.300:FF:000216">
    <property type="entry name" value="Type VII secretion ATPase EccA"/>
    <property type="match status" value="1"/>
</dbReference>
<dbReference type="Gene3D" id="1.10.8.60">
    <property type="match status" value="1"/>
</dbReference>
<dbReference type="Gene3D" id="3.40.50.300">
    <property type="entry name" value="P-loop containing nucleotide triphosphate hydrolases"/>
    <property type="match status" value="1"/>
</dbReference>
<dbReference type="Gene3D" id="1.25.40.10">
    <property type="entry name" value="Tetratricopeptide repeat domain"/>
    <property type="match status" value="1"/>
</dbReference>
<dbReference type="InterPro" id="IPR003593">
    <property type="entry name" value="AAA+_ATPase"/>
</dbReference>
<dbReference type="InterPro" id="IPR041627">
    <property type="entry name" value="AAA_lid_6"/>
</dbReference>
<dbReference type="InterPro" id="IPR003959">
    <property type="entry name" value="ATPase_AAA_core"/>
</dbReference>
<dbReference type="InterPro" id="IPR000641">
    <property type="entry name" value="CbxX/CfxQ"/>
</dbReference>
<dbReference type="InterPro" id="IPR050773">
    <property type="entry name" value="CbxX/CfxQ_RuBisCO_ESX"/>
</dbReference>
<dbReference type="InterPro" id="IPR027417">
    <property type="entry name" value="P-loop_NTPase"/>
</dbReference>
<dbReference type="InterPro" id="IPR023835">
    <property type="entry name" value="T7SS_EccA"/>
</dbReference>
<dbReference type="InterPro" id="IPR049078">
    <property type="entry name" value="T7SS_EccA1-like_N"/>
</dbReference>
<dbReference type="InterPro" id="IPR011990">
    <property type="entry name" value="TPR-like_helical_dom_sf"/>
</dbReference>
<dbReference type="NCBIfam" id="TIGR03922">
    <property type="entry name" value="T7SS_EccA"/>
    <property type="match status" value="1"/>
</dbReference>
<dbReference type="PANTHER" id="PTHR43392">
    <property type="entry name" value="AAA-TYPE ATPASE FAMILY PROTEIN / ANKYRIN REPEAT FAMILY PROTEIN"/>
    <property type="match status" value="1"/>
</dbReference>
<dbReference type="PANTHER" id="PTHR43392:SF2">
    <property type="entry name" value="AAA-TYPE ATPASE FAMILY PROTEIN _ ANKYRIN REPEAT FAMILY PROTEIN"/>
    <property type="match status" value="1"/>
</dbReference>
<dbReference type="Pfam" id="PF00004">
    <property type="entry name" value="AAA"/>
    <property type="match status" value="1"/>
</dbReference>
<dbReference type="Pfam" id="PF17866">
    <property type="entry name" value="AAA_lid_6"/>
    <property type="match status" value="1"/>
</dbReference>
<dbReference type="Pfam" id="PF21545">
    <property type="entry name" value="T7SS_EccA1_N"/>
    <property type="match status" value="1"/>
</dbReference>
<dbReference type="PRINTS" id="PR00819">
    <property type="entry name" value="CBXCFQXSUPER"/>
</dbReference>
<dbReference type="SMART" id="SM00382">
    <property type="entry name" value="AAA"/>
    <property type="match status" value="1"/>
</dbReference>
<dbReference type="SUPFAM" id="SSF52540">
    <property type="entry name" value="P-loop containing nucleoside triphosphate hydrolases"/>
    <property type="match status" value="1"/>
</dbReference>
<dbReference type="SUPFAM" id="SSF48452">
    <property type="entry name" value="TPR-like"/>
    <property type="match status" value="1"/>
</dbReference>
<keyword id="KW-0067">ATP-binding</keyword>
<keyword id="KW-0963">Cytoplasm</keyword>
<keyword id="KW-0547">Nucleotide-binding</keyword>
<keyword id="KW-1185">Reference proteome</keyword>